<sequence length="278" mass="32296">MTVLHSVDFFPSGNASVAIEPRLPQADFPEHHHDFHEIVIVEHGTGIHVFNGQPYTITGGTVCFVRDHDRHLYEHTDNLCLTNVLYRSPDRFQFLAGLNQLLPQELDGQYPSHWRVNHSVLQQVRQLVAQMEQQEGENDLPSTASREILFMQLLLLLRKSSLQENLENSASRLNLLLAWLEDHFADEVNWDAVADQFSLSLRTLHRQLKQQTGLTPQRYLNRLRLMKARHLLRHSEASVTDIAYHCGFSDSNHFSTLFRREFNWSPRDIRQGRDGFLQ</sequence>
<evidence type="ECO:0000255" key="1">
    <source>
        <dbReference type="HAMAP-Rule" id="MF_01534"/>
    </source>
</evidence>
<name>RHAS_ECO57</name>
<dbReference type="EMBL" id="AE005174">
    <property type="protein sequence ID" value="AAG59099.1"/>
    <property type="molecule type" value="Genomic_DNA"/>
</dbReference>
<dbReference type="EMBL" id="BA000007">
    <property type="protein sequence ID" value="BAB38255.1"/>
    <property type="molecule type" value="Genomic_DNA"/>
</dbReference>
<dbReference type="PIR" id="G86079">
    <property type="entry name" value="G86079"/>
</dbReference>
<dbReference type="PIR" id="H91232">
    <property type="entry name" value="H91232"/>
</dbReference>
<dbReference type="RefSeq" id="NP_312859.1">
    <property type="nucleotide sequence ID" value="NC_002695.1"/>
</dbReference>
<dbReference type="RefSeq" id="WP_000217135.1">
    <property type="nucleotide sequence ID" value="NZ_VOAI01000016.1"/>
</dbReference>
<dbReference type="SMR" id="Q8X897"/>
<dbReference type="STRING" id="155864.Z5449"/>
<dbReference type="GeneID" id="915064"/>
<dbReference type="KEGG" id="ece:Z5449"/>
<dbReference type="KEGG" id="ecs:ECs_4832"/>
<dbReference type="PATRIC" id="fig|386585.9.peg.5050"/>
<dbReference type="eggNOG" id="COG4977">
    <property type="taxonomic scope" value="Bacteria"/>
</dbReference>
<dbReference type="HOGENOM" id="CLU_000445_88_5_6"/>
<dbReference type="OMA" id="GHYPSHW"/>
<dbReference type="Proteomes" id="UP000000558">
    <property type="component" value="Chromosome"/>
</dbReference>
<dbReference type="Proteomes" id="UP000002519">
    <property type="component" value="Chromosome"/>
</dbReference>
<dbReference type="GO" id="GO:0005737">
    <property type="term" value="C:cytoplasm"/>
    <property type="evidence" value="ECO:0007669"/>
    <property type="project" value="UniProtKB-SubCell"/>
</dbReference>
<dbReference type="GO" id="GO:0003700">
    <property type="term" value="F:DNA-binding transcription factor activity"/>
    <property type="evidence" value="ECO:0007669"/>
    <property type="project" value="UniProtKB-UniRule"/>
</dbReference>
<dbReference type="GO" id="GO:0043565">
    <property type="term" value="F:sequence-specific DNA binding"/>
    <property type="evidence" value="ECO:0007669"/>
    <property type="project" value="InterPro"/>
</dbReference>
<dbReference type="GO" id="GO:0045893">
    <property type="term" value="P:positive regulation of DNA-templated transcription"/>
    <property type="evidence" value="ECO:0007669"/>
    <property type="project" value="UniProtKB-UniRule"/>
</dbReference>
<dbReference type="GO" id="GO:0019299">
    <property type="term" value="P:rhamnose metabolic process"/>
    <property type="evidence" value="ECO:0007669"/>
    <property type="project" value="UniProtKB-UniRule"/>
</dbReference>
<dbReference type="CDD" id="cd06977">
    <property type="entry name" value="cupin_RhaR_RhaS-like_N"/>
    <property type="match status" value="1"/>
</dbReference>
<dbReference type="FunFam" id="1.10.10.60:FF:000181">
    <property type="entry name" value="HTH-type transcriptional activator RhaS"/>
    <property type="match status" value="1"/>
</dbReference>
<dbReference type="FunFam" id="2.60.120.10:FF:000041">
    <property type="entry name" value="HTH-type transcriptional activator RhaS"/>
    <property type="match status" value="1"/>
</dbReference>
<dbReference type="Gene3D" id="1.10.10.60">
    <property type="entry name" value="Homeodomain-like"/>
    <property type="match status" value="1"/>
</dbReference>
<dbReference type="Gene3D" id="2.60.120.10">
    <property type="entry name" value="Jelly Rolls"/>
    <property type="match status" value="1"/>
</dbReference>
<dbReference type="HAMAP" id="MF_01534">
    <property type="entry name" value="HTH_type_RhaS"/>
    <property type="match status" value="1"/>
</dbReference>
<dbReference type="InterPro" id="IPR003313">
    <property type="entry name" value="AraC-bd"/>
</dbReference>
<dbReference type="InterPro" id="IPR050204">
    <property type="entry name" value="AraC_XylS_family_regulators"/>
</dbReference>
<dbReference type="InterPro" id="IPR009057">
    <property type="entry name" value="Homeodomain-like_sf"/>
</dbReference>
<dbReference type="InterPro" id="IPR037923">
    <property type="entry name" value="HTH-like"/>
</dbReference>
<dbReference type="InterPro" id="IPR018060">
    <property type="entry name" value="HTH_AraC"/>
</dbReference>
<dbReference type="InterPro" id="IPR018062">
    <property type="entry name" value="HTH_AraC-typ_CS"/>
</dbReference>
<dbReference type="InterPro" id="IPR047220">
    <property type="entry name" value="RhaR_RhaS-like_N"/>
</dbReference>
<dbReference type="InterPro" id="IPR014710">
    <property type="entry name" value="RmlC-like_jellyroll"/>
</dbReference>
<dbReference type="InterPro" id="IPR020449">
    <property type="entry name" value="Tscrpt_reg_AraC-type_HTH"/>
</dbReference>
<dbReference type="InterPro" id="IPR023609">
    <property type="entry name" value="Tscrpt_reg_HTH_RhaS"/>
</dbReference>
<dbReference type="NCBIfam" id="NF010028">
    <property type="entry name" value="PRK13503.1"/>
    <property type="match status" value="1"/>
</dbReference>
<dbReference type="PANTHER" id="PTHR46796:SF13">
    <property type="entry name" value="HTH-TYPE TRANSCRIPTIONAL ACTIVATOR RHAS"/>
    <property type="match status" value="1"/>
</dbReference>
<dbReference type="PANTHER" id="PTHR46796">
    <property type="entry name" value="HTH-TYPE TRANSCRIPTIONAL ACTIVATOR RHAS-RELATED"/>
    <property type="match status" value="1"/>
</dbReference>
<dbReference type="Pfam" id="PF02311">
    <property type="entry name" value="AraC_binding"/>
    <property type="match status" value="1"/>
</dbReference>
<dbReference type="Pfam" id="PF12833">
    <property type="entry name" value="HTH_18"/>
    <property type="match status" value="1"/>
</dbReference>
<dbReference type="PRINTS" id="PR00032">
    <property type="entry name" value="HTHARAC"/>
</dbReference>
<dbReference type="SMART" id="SM00342">
    <property type="entry name" value="HTH_ARAC"/>
    <property type="match status" value="1"/>
</dbReference>
<dbReference type="SUPFAM" id="SSF46689">
    <property type="entry name" value="Homeodomain-like"/>
    <property type="match status" value="2"/>
</dbReference>
<dbReference type="SUPFAM" id="SSF51215">
    <property type="entry name" value="Regulatory protein AraC"/>
    <property type="match status" value="1"/>
</dbReference>
<dbReference type="PROSITE" id="PS00041">
    <property type="entry name" value="HTH_ARAC_FAMILY_1"/>
    <property type="match status" value="1"/>
</dbReference>
<dbReference type="PROSITE" id="PS01124">
    <property type="entry name" value="HTH_ARAC_FAMILY_2"/>
    <property type="match status" value="1"/>
</dbReference>
<accession>Q8X897</accession>
<accession>Q7A996</accession>
<protein>
    <recommendedName>
        <fullName evidence="1">HTH-type transcriptional activator RhaS</fullName>
    </recommendedName>
    <alternativeName>
        <fullName evidence="1">L-rhamnose operon regulatory protein RhaS</fullName>
    </alternativeName>
</protein>
<keyword id="KW-0010">Activator</keyword>
<keyword id="KW-0963">Cytoplasm</keyword>
<keyword id="KW-0238">DNA-binding</keyword>
<keyword id="KW-1185">Reference proteome</keyword>
<keyword id="KW-0677">Repeat</keyword>
<keyword id="KW-0684">Rhamnose metabolism</keyword>
<keyword id="KW-0804">Transcription</keyword>
<keyword id="KW-0805">Transcription regulation</keyword>
<comment type="function">
    <text evidence="1">Activates expression of the rhaBAD and rhaT operons.</text>
</comment>
<comment type="subunit">
    <text evidence="1">Binds DNA as a dimer.</text>
</comment>
<comment type="subcellular location">
    <subcellularLocation>
        <location evidence="1">Cytoplasm</location>
    </subcellularLocation>
</comment>
<feature type="chain" id="PRO_0000194565" description="HTH-type transcriptional activator RhaS">
    <location>
        <begin position="1"/>
        <end position="278"/>
    </location>
</feature>
<feature type="domain" description="HTH araC/xylS-type" evidence="1">
    <location>
        <begin position="174"/>
        <end position="272"/>
    </location>
</feature>
<feature type="DNA-binding region" description="H-T-H motif" evidence="1">
    <location>
        <begin position="191"/>
        <end position="212"/>
    </location>
</feature>
<feature type="DNA-binding region" description="H-T-H motif" evidence="1">
    <location>
        <begin position="239"/>
        <end position="262"/>
    </location>
</feature>
<feature type="site" description="Interaction with sigma-70" evidence="1">
    <location>
        <position position="241"/>
    </location>
</feature>
<feature type="site" description="Interaction with sigma-70" evidence="1">
    <location>
        <position position="250"/>
    </location>
</feature>
<proteinExistence type="inferred from homology"/>
<organism>
    <name type="scientific">Escherichia coli O157:H7</name>
    <dbReference type="NCBI Taxonomy" id="83334"/>
    <lineage>
        <taxon>Bacteria</taxon>
        <taxon>Pseudomonadati</taxon>
        <taxon>Pseudomonadota</taxon>
        <taxon>Gammaproteobacteria</taxon>
        <taxon>Enterobacterales</taxon>
        <taxon>Enterobacteriaceae</taxon>
        <taxon>Escherichia</taxon>
    </lineage>
</organism>
<gene>
    <name evidence="1" type="primary">rhaS</name>
    <name type="ordered locus">Z5449</name>
    <name type="ordered locus">ECs4832</name>
</gene>
<reference key="1">
    <citation type="journal article" date="2001" name="Nature">
        <title>Genome sequence of enterohaemorrhagic Escherichia coli O157:H7.</title>
        <authorList>
            <person name="Perna N.T."/>
            <person name="Plunkett G. III"/>
            <person name="Burland V."/>
            <person name="Mau B."/>
            <person name="Glasner J.D."/>
            <person name="Rose D.J."/>
            <person name="Mayhew G.F."/>
            <person name="Evans P.S."/>
            <person name="Gregor J."/>
            <person name="Kirkpatrick H.A."/>
            <person name="Posfai G."/>
            <person name="Hackett J."/>
            <person name="Klink S."/>
            <person name="Boutin A."/>
            <person name="Shao Y."/>
            <person name="Miller L."/>
            <person name="Grotbeck E.J."/>
            <person name="Davis N.W."/>
            <person name="Lim A."/>
            <person name="Dimalanta E.T."/>
            <person name="Potamousis K."/>
            <person name="Apodaca J."/>
            <person name="Anantharaman T.S."/>
            <person name="Lin J."/>
            <person name="Yen G."/>
            <person name="Schwartz D.C."/>
            <person name="Welch R.A."/>
            <person name="Blattner F.R."/>
        </authorList>
    </citation>
    <scope>NUCLEOTIDE SEQUENCE [LARGE SCALE GENOMIC DNA]</scope>
    <source>
        <strain>O157:H7 / EDL933 / ATCC 700927 / EHEC</strain>
    </source>
</reference>
<reference key="2">
    <citation type="journal article" date="2001" name="DNA Res.">
        <title>Complete genome sequence of enterohemorrhagic Escherichia coli O157:H7 and genomic comparison with a laboratory strain K-12.</title>
        <authorList>
            <person name="Hayashi T."/>
            <person name="Makino K."/>
            <person name="Ohnishi M."/>
            <person name="Kurokawa K."/>
            <person name="Ishii K."/>
            <person name="Yokoyama K."/>
            <person name="Han C.-G."/>
            <person name="Ohtsubo E."/>
            <person name="Nakayama K."/>
            <person name="Murata T."/>
            <person name="Tanaka M."/>
            <person name="Tobe T."/>
            <person name="Iida T."/>
            <person name="Takami H."/>
            <person name="Honda T."/>
            <person name="Sasakawa C."/>
            <person name="Ogasawara N."/>
            <person name="Yasunaga T."/>
            <person name="Kuhara S."/>
            <person name="Shiba T."/>
            <person name="Hattori M."/>
            <person name="Shinagawa H."/>
        </authorList>
    </citation>
    <scope>NUCLEOTIDE SEQUENCE [LARGE SCALE GENOMIC DNA]</scope>
    <source>
        <strain>O157:H7 / Sakai / RIMD 0509952 / EHEC</strain>
    </source>
</reference>